<reference key="1">
    <citation type="journal article" date="1985" name="Proc. Natl. Acad. Sci. U.S.A.">
        <title>Identification of pTiC58 plasmid-encoded proteins for virulence in Agrobacterium tumefaciens.</title>
        <authorList>
            <person name="Hagiya M."/>
            <person name="Close T.J."/>
            <person name="Tait R.C."/>
            <person name="Kado C.I."/>
        </authorList>
    </citation>
    <scope>PRELIMINARY NUCLEOTIDE SEQUENCE [GENOMIC DNA]</scope>
</reference>
<reference key="2">
    <citation type="journal article" date="1990" name="Plasmid">
        <title>Molecular characterization of the vir regulon of Agrobacterium tumefaciens: complete nucleotide sequence and gene organization of the 28.63-kbp regulon cloned as a single unit.</title>
        <authorList>
            <person name="Rogowsky P.M."/>
            <person name="Powell B.S."/>
            <person name="Shirasu K."/>
            <person name="Lin T.-S."/>
            <person name="Morel P."/>
            <person name="Zyprian E.M."/>
            <person name="Steck T.R."/>
            <person name="Kado C.I."/>
        </authorList>
    </citation>
    <scope>NUCLEOTIDE SEQUENCE [GENOMIC DNA]</scope>
</reference>
<reference key="3">
    <citation type="journal article" date="2001" name="Science">
        <title>The genome of the natural genetic engineer Agrobacterium tumefaciens C58.</title>
        <authorList>
            <person name="Wood D.W."/>
            <person name="Setubal J.C."/>
            <person name="Kaul R."/>
            <person name="Monks D.E."/>
            <person name="Kitajima J.P."/>
            <person name="Okura V.K."/>
            <person name="Zhou Y."/>
            <person name="Chen L."/>
            <person name="Wood G.E."/>
            <person name="Almeida N.F. Jr."/>
            <person name="Woo L."/>
            <person name="Chen Y."/>
            <person name="Paulsen I.T."/>
            <person name="Eisen J.A."/>
            <person name="Karp P.D."/>
            <person name="Bovee D. Sr."/>
            <person name="Chapman P."/>
            <person name="Clendenning J."/>
            <person name="Deatherage G."/>
            <person name="Gillet W."/>
            <person name="Grant C."/>
            <person name="Kutyavin T."/>
            <person name="Levy R."/>
            <person name="Li M.-J."/>
            <person name="McClelland E."/>
            <person name="Palmieri A."/>
            <person name="Raymond C."/>
            <person name="Rouse G."/>
            <person name="Saenphimmachak C."/>
            <person name="Wu Z."/>
            <person name="Romero P."/>
            <person name="Gordon D."/>
            <person name="Zhang S."/>
            <person name="Yoo H."/>
            <person name="Tao Y."/>
            <person name="Biddle P."/>
            <person name="Jung M."/>
            <person name="Krespan W."/>
            <person name="Perry M."/>
            <person name="Gordon-Kamm B."/>
            <person name="Liao L."/>
            <person name="Kim S."/>
            <person name="Hendrick C."/>
            <person name="Zhao Z.-Y."/>
            <person name="Dolan M."/>
            <person name="Chumley F."/>
            <person name="Tingey S.V."/>
            <person name="Tomb J.-F."/>
            <person name="Gordon M.P."/>
            <person name="Olson M.V."/>
            <person name="Nester E.W."/>
        </authorList>
    </citation>
    <scope>NUCLEOTIDE SEQUENCE [LARGE SCALE GENOMIC DNA]</scope>
</reference>
<reference key="4">
    <citation type="journal article" date="2001" name="Science">
        <title>Genome sequence of the plant pathogen and biotechnology agent Agrobacterium tumefaciens C58.</title>
        <authorList>
            <person name="Goodner B."/>
            <person name="Hinkle G."/>
            <person name="Gattung S."/>
            <person name="Miller N."/>
            <person name="Blanchard M."/>
            <person name="Qurollo B."/>
            <person name="Goldman B.S."/>
            <person name="Cao Y."/>
            <person name="Askenazi M."/>
            <person name="Halling C."/>
            <person name="Mullin L."/>
            <person name="Houmiel K."/>
            <person name="Gordon J."/>
            <person name="Vaudin M."/>
            <person name="Iartchouk O."/>
            <person name="Epp A."/>
            <person name="Liu F."/>
            <person name="Wollam C."/>
            <person name="Allinger M."/>
            <person name="Doughty D."/>
            <person name="Scott C."/>
            <person name="Lappas C."/>
            <person name="Markelz B."/>
            <person name="Flanagan C."/>
            <person name="Crowell C."/>
            <person name="Gurson J."/>
            <person name="Lomo C."/>
            <person name="Sear C."/>
            <person name="Strub G."/>
            <person name="Cielo C."/>
            <person name="Slater S."/>
        </authorList>
    </citation>
    <scope>NUCLEOTIDE SEQUENCE [LARGE SCALE GENOMIC DNA]</scope>
    <source>
        <strain>C58 / ATCC 33970</strain>
    </source>
</reference>
<geneLocation type="plasmid">
    <name>pTiC58</name>
</geneLocation>
<comment type="miscellaneous">
    <text>The Ti plasmid contains at least six transcriptional units, designated vir loci, which are essential for efficient crown-gall tumorigenesis.</text>
</comment>
<dbReference type="EMBL" id="M11311">
    <property type="protein sequence ID" value="AAA98368.1"/>
    <property type="status" value="ALT_SEQ"/>
    <property type="molecule type" value="Genomic_DNA"/>
</dbReference>
<dbReference type="EMBL" id="J03320">
    <property type="protein sequence ID" value="AAA91605.1"/>
    <property type="molecule type" value="Genomic_DNA"/>
</dbReference>
<dbReference type="EMBL" id="AE007871">
    <property type="protein sequence ID" value="AAK90945.2"/>
    <property type="molecule type" value="Genomic_DNA"/>
</dbReference>
<dbReference type="PIR" id="AE3250">
    <property type="entry name" value="AE3250"/>
</dbReference>
<dbReference type="PIR" id="S11840">
    <property type="entry name" value="S11840"/>
</dbReference>
<dbReference type="RefSeq" id="NP_396504.2">
    <property type="nucleotide sequence ID" value="NC_003065.3"/>
</dbReference>
<dbReference type="EnsemblBacteria" id="AAK90945">
    <property type="protein sequence ID" value="AAK90945"/>
    <property type="gene ID" value="Atu6183"/>
</dbReference>
<dbReference type="KEGG" id="atu:Atu6183"/>
<dbReference type="PATRIC" id="fig|176299.10.peg.5377"/>
<dbReference type="HOGENOM" id="CLU_408073_0_0_5"/>
<dbReference type="OrthoDB" id="8294805at2"/>
<dbReference type="BioCyc" id="AGRO:ATU6183-MONOMER"/>
<dbReference type="Proteomes" id="UP000000813">
    <property type="component" value="Plasmid Ti"/>
</dbReference>
<feature type="chain" id="PRO_0000065862" description="Protein VirD3">
    <location>
        <begin position="1"/>
        <end position="673"/>
    </location>
</feature>
<feature type="region of interest" description="Disordered" evidence="1">
    <location>
        <begin position="36"/>
        <end position="73"/>
    </location>
</feature>
<feature type="region of interest" description="Disordered" evidence="1">
    <location>
        <begin position="171"/>
        <end position="216"/>
    </location>
</feature>
<feature type="region of interest" description="Disordered" evidence="1">
    <location>
        <begin position="229"/>
        <end position="409"/>
    </location>
</feature>
<feature type="region of interest" description="Disordered" evidence="1">
    <location>
        <begin position="478"/>
        <end position="497"/>
    </location>
</feature>
<feature type="region of interest" description="Disordered" evidence="1">
    <location>
        <begin position="520"/>
        <end position="552"/>
    </location>
</feature>
<feature type="region of interest" description="Disordered" evidence="1">
    <location>
        <begin position="585"/>
        <end position="673"/>
    </location>
</feature>
<feature type="compositionally biased region" description="Polar residues" evidence="1">
    <location>
        <begin position="171"/>
        <end position="183"/>
    </location>
</feature>
<feature type="compositionally biased region" description="Polar residues" evidence="1">
    <location>
        <begin position="193"/>
        <end position="216"/>
    </location>
</feature>
<feature type="compositionally biased region" description="Polar residues" evidence="1">
    <location>
        <begin position="234"/>
        <end position="246"/>
    </location>
</feature>
<feature type="compositionally biased region" description="Polar residues" evidence="1">
    <location>
        <begin position="268"/>
        <end position="277"/>
    </location>
</feature>
<feature type="compositionally biased region" description="Low complexity" evidence="1">
    <location>
        <begin position="278"/>
        <end position="287"/>
    </location>
</feature>
<feature type="compositionally biased region" description="Basic and acidic residues" evidence="1">
    <location>
        <begin position="288"/>
        <end position="303"/>
    </location>
</feature>
<feature type="compositionally biased region" description="Basic and acidic residues" evidence="1">
    <location>
        <begin position="520"/>
        <end position="534"/>
    </location>
</feature>
<feature type="compositionally biased region" description="Basic and acidic residues" evidence="1">
    <location>
        <begin position="638"/>
        <end position="673"/>
    </location>
</feature>
<feature type="sequence conflict" description="In Ref. 1 and 2." evidence="2" ref="1 2">
    <original>AG</original>
    <variation>GA</variation>
    <location>
        <begin position="358"/>
        <end position="359"/>
    </location>
</feature>
<protein>
    <recommendedName>
        <fullName>Protein VirD3</fullName>
    </recommendedName>
</protein>
<accession>P18593</accession>
<accession>P06523</accession>
<keyword id="KW-0192">Crown gall tumor</keyword>
<keyword id="KW-0614">Plasmid</keyword>
<keyword id="KW-1185">Reference proteome</keyword>
<name>VIRD3_AGRFC</name>
<evidence type="ECO:0000256" key="1">
    <source>
        <dbReference type="SAM" id="MobiDB-lite"/>
    </source>
</evidence>
<evidence type="ECO:0000305" key="2"/>
<gene>
    <name type="primary">virD3</name>
    <name type="ordered locus">Atu6183</name>
    <name type="ORF">AGR_pTi_22</name>
</gene>
<organism>
    <name type="scientific">Agrobacterium fabrum (strain C58 / ATCC 33970)</name>
    <name type="common">Agrobacterium tumefaciens (strain C58)</name>
    <dbReference type="NCBI Taxonomy" id="176299"/>
    <lineage>
        <taxon>Bacteria</taxon>
        <taxon>Pseudomonadati</taxon>
        <taxon>Pseudomonadota</taxon>
        <taxon>Alphaproteobacteria</taxon>
        <taxon>Hyphomicrobiales</taxon>
        <taxon>Rhizobiaceae</taxon>
        <taxon>Rhizobium/Agrobacterium group</taxon>
        <taxon>Agrobacterium</taxon>
        <taxon>Agrobacterium tumefaciens complex</taxon>
    </lineage>
</organism>
<proteinExistence type="predicted"/>
<sequence length="673" mass="72605">MANEEFTRHYAWPVPVASNDEGRGTARIPIQAQSIVAGEDGRDTSVPTALSRPPIEDMPHGVQETSASGGRLGAARLRDSVIPPGISEARTDLSAILRKKSGSFRTGMQYLRGLERENFDKQDREASALPDLSARGIKRPREIEYPGNASGLTIKRQDGLGIEINTISASSPVNRAAHSSNWQGAPEPGVYNVQPSADRAQNSAQESSTFPDGTSVSALYSGPLAEWFERDTGSETTRNSGNTISSPLRGLEEFGDSADSRYLGREAQSLSVTVTTPNSNAEASSHSAHTETLDDVSSDRSSEQGRGPLGAAILGSHHDLSPRAQKLSQTNRDSPELTDADLAKVDAVFESLSKGPPAGESAAPDFRERGPGSAFQKEGVSDRANGVPTNWEVPFGRGGGHSPQALRSSGVELDDFPDFTEAELAKIDALVESHSNRSLSVRNIVPDLRGAGADNVFRKEGVVERAEKMPIDSVSLTRLNGERSRSPKTSQASLEDFPDLTDADLAHIEESERIARTAVEKGKQKISTEADTRFDLGNSSAPRVSPRSVTPLVPNANQPITSWFYEAQKTCDKLVENTYVKPAVDSSRARNDVENTAARLGDPAPALGHDNLGRTRALTPVRDVMSRPSADRQLASHAAEHSAIDDIWKRDDRDRRTHPYRGLDSRSREGCGR</sequence>